<protein>
    <recommendedName>
        <fullName evidence="1">Protease HtpX homolog</fullName>
        <ecNumber evidence="1">3.4.24.-</ecNumber>
    </recommendedName>
</protein>
<name>HTPX_CHLPM</name>
<sequence>MKRVFLFLITNLAVILVLSFSARLLGVDRFLTSNGLDMGMLLAFAALIGFGGSFISLLMSKTMAKWSTGAQVILRPSNEEESWLLNTVRQLSKKADLAMPEVAIYEGAPNAFATGPSRSKSLVAVSSGLLRSMDRKQVEAVLAHEVAHIQNGDMVTLTLIQGVVNTFVIFLARVFAYALDSFLRRDEDESGSPGIGYWISSIAFEIVFGILASIVVMYFSRKREFRADAGAAALIGDRRPMIEALRALGSLEAGKLPKEMAASGIAGGGMMALFSSHPPLESRIAALESAR</sequence>
<feature type="chain" id="PRO_1000077475" description="Protease HtpX homolog">
    <location>
        <begin position="1"/>
        <end position="291"/>
    </location>
</feature>
<feature type="transmembrane region" description="Helical" evidence="1">
    <location>
        <begin position="4"/>
        <end position="24"/>
    </location>
</feature>
<feature type="transmembrane region" description="Helical" evidence="1">
    <location>
        <begin position="38"/>
        <end position="58"/>
    </location>
</feature>
<feature type="transmembrane region" description="Helical" evidence="1">
    <location>
        <begin position="159"/>
        <end position="179"/>
    </location>
</feature>
<feature type="transmembrane region" description="Helical" evidence="1">
    <location>
        <begin position="199"/>
        <end position="219"/>
    </location>
</feature>
<feature type="active site" evidence="1">
    <location>
        <position position="145"/>
    </location>
</feature>
<feature type="binding site" evidence="1">
    <location>
        <position position="144"/>
    </location>
    <ligand>
        <name>Zn(2+)</name>
        <dbReference type="ChEBI" id="CHEBI:29105"/>
        <note>catalytic</note>
    </ligand>
</feature>
<feature type="binding site" evidence="1">
    <location>
        <position position="148"/>
    </location>
    <ligand>
        <name>Zn(2+)</name>
        <dbReference type="ChEBI" id="CHEBI:29105"/>
        <note>catalytic</note>
    </ligand>
</feature>
<feature type="binding site" evidence="1">
    <location>
        <position position="224"/>
    </location>
    <ligand>
        <name>Zn(2+)</name>
        <dbReference type="ChEBI" id="CHEBI:29105"/>
        <note>catalytic</note>
    </ligand>
</feature>
<accession>A4SEH5</accession>
<comment type="cofactor">
    <cofactor evidence="1">
        <name>Zn(2+)</name>
        <dbReference type="ChEBI" id="CHEBI:29105"/>
    </cofactor>
    <text evidence="1">Binds 1 zinc ion per subunit.</text>
</comment>
<comment type="subcellular location">
    <subcellularLocation>
        <location evidence="1">Cell inner membrane</location>
        <topology evidence="1">Multi-pass membrane protein</topology>
    </subcellularLocation>
</comment>
<comment type="similarity">
    <text evidence="1">Belongs to the peptidase M48B family.</text>
</comment>
<gene>
    <name evidence="1" type="primary">htpX</name>
    <name type="ordered locus">Cvib_0869</name>
</gene>
<organism>
    <name type="scientific">Chlorobium phaeovibrioides (strain DSM 265 / 1930)</name>
    <name type="common">Prosthecochloris vibrioformis (strain DSM 265)</name>
    <dbReference type="NCBI Taxonomy" id="290318"/>
    <lineage>
        <taxon>Bacteria</taxon>
        <taxon>Pseudomonadati</taxon>
        <taxon>Chlorobiota</taxon>
        <taxon>Chlorobiia</taxon>
        <taxon>Chlorobiales</taxon>
        <taxon>Chlorobiaceae</taxon>
        <taxon>Chlorobium/Pelodictyon group</taxon>
        <taxon>Chlorobium</taxon>
    </lineage>
</organism>
<reference key="1">
    <citation type="submission" date="2007-03" db="EMBL/GenBank/DDBJ databases">
        <title>Complete sequence of Prosthecochloris vibrioformis DSM 265.</title>
        <authorList>
            <consortium name="US DOE Joint Genome Institute"/>
            <person name="Copeland A."/>
            <person name="Lucas S."/>
            <person name="Lapidus A."/>
            <person name="Barry K."/>
            <person name="Detter J.C."/>
            <person name="Glavina del Rio T."/>
            <person name="Hammon N."/>
            <person name="Israni S."/>
            <person name="Pitluck S."/>
            <person name="Schmutz J."/>
            <person name="Larimer F."/>
            <person name="Land M."/>
            <person name="Hauser L."/>
            <person name="Mikhailova N."/>
            <person name="Li T."/>
            <person name="Overmann J."/>
            <person name="Schuster S.C."/>
            <person name="Bryant D.A."/>
            <person name="Richardson P."/>
        </authorList>
    </citation>
    <scope>NUCLEOTIDE SEQUENCE [LARGE SCALE GENOMIC DNA]</scope>
    <source>
        <strain>DSM 265 / 1930</strain>
    </source>
</reference>
<evidence type="ECO:0000255" key="1">
    <source>
        <dbReference type="HAMAP-Rule" id="MF_00188"/>
    </source>
</evidence>
<proteinExistence type="inferred from homology"/>
<dbReference type="EC" id="3.4.24.-" evidence="1"/>
<dbReference type="EMBL" id="CP000607">
    <property type="protein sequence ID" value="ABP36884.1"/>
    <property type="molecule type" value="Genomic_DNA"/>
</dbReference>
<dbReference type="SMR" id="A4SEH5"/>
<dbReference type="STRING" id="290318.Cvib_0869"/>
<dbReference type="MEROPS" id="M48.002"/>
<dbReference type="KEGG" id="pvi:Cvib_0869"/>
<dbReference type="eggNOG" id="COG0501">
    <property type="taxonomic scope" value="Bacteria"/>
</dbReference>
<dbReference type="HOGENOM" id="CLU_042266_1_0_10"/>
<dbReference type="OrthoDB" id="9810445at2"/>
<dbReference type="GO" id="GO:0005886">
    <property type="term" value="C:plasma membrane"/>
    <property type="evidence" value="ECO:0007669"/>
    <property type="project" value="UniProtKB-SubCell"/>
</dbReference>
<dbReference type="GO" id="GO:0004222">
    <property type="term" value="F:metalloendopeptidase activity"/>
    <property type="evidence" value="ECO:0007669"/>
    <property type="project" value="UniProtKB-UniRule"/>
</dbReference>
<dbReference type="GO" id="GO:0008270">
    <property type="term" value="F:zinc ion binding"/>
    <property type="evidence" value="ECO:0007669"/>
    <property type="project" value="UniProtKB-UniRule"/>
</dbReference>
<dbReference type="GO" id="GO:0006508">
    <property type="term" value="P:proteolysis"/>
    <property type="evidence" value="ECO:0007669"/>
    <property type="project" value="UniProtKB-KW"/>
</dbReference>
<dbReference type="CDD" id="cd07335">
    <property type="entry name" value="M48B_HtpX_like"/>
    <property type="match status" value="1"/>
</dbReference>
<dbReference type="Gene3D" id="3.30.2010.10">
    <property type="entry name" value="Metalloproteases ('zincins'), catalytic domain"/>
    <property type="match status" value="1"/>
</dbReference>
<dbReference type="HAMAP" id="MF_00188">
    <property type="entry name" value="Pept_M48_protease_HtpX"/>
    <property type="match status" value="1"/>
</dbReference>
<dbReference type="InterPro" id="IPR050083">
    <property type="entry name" value="HtpX_protease"/>
</dbReference>
<dbReference type="InterPro" id="IPR022919">
    <property type="entry name" value="Pept_M48_protease_HtpX"/>
</dbReference>
<dbReference type="InterPro" id="IPR001915">
    <property type="entry name" value="Peptidase_M48"/>
</dbReference>
<dbReference type="NCBIfam" id="NF003965">
    <property type="entry name" value="PRK05457.1"/>
    <property type="match status" value="1"/>
</dbReference>
<dbReference type="PANTHER" id="PTHR43221">
    <property type="entry name" value="PROTEASE HTPX"/>
    <property type="match status" value="1"/>
</dbReference>
<dbReference type="PANTHER" id="PTHR43221:SF1">
    <property type="entry name" value="PROTEASE HTPX"/>
    <property type="match status" value="1"/>
</dbReference>
<dbReference type="Pfam" id="PF01435">
    <property type="entry name" value="Peptidase_M48"/>
    <property type="match status" value="1"/>
</dbReference>
<dbReference type="PROSITE" id="PS00142">
    <property type="entry name" value="ZINC_PROTEASE"/>
    <property type="match status" value="1"/>
</dbReference>
<keyword id="KW-0997">Cell inner membrane</keyword>
<keyword id="KW-1003">Cell membrane</keyword>
<keyword id="KW-0378">Hydrolase</keyword>
<keyword id="KW-0472">Membrane</keyword>
<keyword id="KW-0479">Metal-binding</keyword>
<keyword id="KW-0482">Metalloprotease</keyword>
<keyword id="KW-0645">Protease</keyword>
<keyword id="KW-0812">Transmembrane</keyword>
<keyword id="KW-1133">Transmembrane helix</keyword>
<keyword id="KW-0862">Zinc</keyword>